<accession>A6WKY2</accession>
<sequence>MMTQANAYFYDGADVALLNGQYTDVFSLLGMHSANEGKALIVRCFLRNALSVDVISIKDGRKVASLDKVNEQGLFAGTLGRRVKPFLYLLRVEYPLCQLDIVDPYQFDSLLNSDDIYLFGEGSAERAYEFLGANWRQTQGVEGVHFCVWAPNAKRVSVVGDFNHWDDTRHVMRQHLANGLWELFLPNVVEGAHYKFDLVYQNGERHTKSDPMATQMECAPHNASIVPPKAHHSWNDTAWMSKRAATAWHKAPMSAYEVHLGSWRRKGEQGEQYLDYQDLIEQLIPYVKEQGFTHIELMPISEFPFDGSWGYQPVGLYAPTHRFGDANGLKAFVDACHQAGIGIILDWVSAHFPKDPHGLVRFDGTCLYEHEDPRKGTHPDWDTLIYNYDRGEVRSFLLSNACYWLREFHFDGLRLDAVSSMLYLDYSREPGQWLPNAYGGRENLEAISFLQILNQRLYQAFPGVCMIAEESTAFAGVTKPTDQQGLGFGFKWNMGWMNDSLSYLGRDPLYRQFHHHQLTFSLMYAYTEQFMLSVSHDEVVHGKGSLLHKIPGDDWQKFATLRAYYGFMWGHPGKKLLFMGCEFGQRNEWNHNQSLDWHLLAYEPHQGVQRWLKDLNHLYQAMPALSVQDYEGAGFSWLDCENSRDSIFTFVRYGLAGDAPLVFVINMTPQLHTGFRIGLPLAGDYREYLNSDSQIYGGSNQGNAGTVVAESLPWQGMAQSALITVPPLGCLVIGPATGLAEAN</sequence>
<evidence type="ECO:0000255" key="1">
    <source>
        <dbReference type="HAMAP-Rule" id="MF_00685"/>
    </source>
</evidence>
<feature type="chain" id="PRO_1000044998" description="1,4-alpha-glucan branching enzyme GlgB">
    <location>
        <begin position="1"/>
        <end position="743"/>
    </location>
</feature>
<feature type="active site" description="Nucleophile" evidence="1">
    <location>
        <position position="416"/>
    </location>
</feature>
<feature type="active site" description="Proton donor" evidence="1">
    <location>
        <position position="469"/>
    </location>
</feature>
<protein>
    <recommendedName>
        <fullName evidence="1">1,4-alpha-glucan branching enzyme GlgB</fullName>
        <ecNumber evidence="1">2.4.1.18</ecNumber>
    </recommendedName>
    <alternativeName>
        <fullName evidence="1">1,4-alpha-D-glucan:1,4-alpha-D-glucan 6-glucosyl-transferase</fullName>
    </alternativeName>
    <alternativeName>
        <fullName evidence="1">Alpha-(1-&gt;4)-glucan branching enzyme</fullName>
    </alternativeName>
    <alternativeName>
        <fullName evidence="1">Glycogen branching enzyme</fullName>
        <shortName evidence="1">BE</shortName>
    </alternativeName>
</protein>
<dbReference type="EC" id="2.4.1.18" evidence="1"/>
<dbReference type="EMBL" id="CP000753">
    <property type="protein sequence ID" value="ABS07471.1"/>
    <property type="molecule type" value="Genomic_DNA"/>
</dbReference>
<dbReference type="RefSeq" id="WP_012088648.1">
    <property type="nucleotide sequence ID" value="NC_009665.1"/>
</dbReference>
<dbReference type="SMR" id="A6WKY2"/>
<dbReference type="CAZy" id="CBM48">
    <property type="family name" value="Carbohydrate-Binding Module Family 48"/>
</dbReference>
<dbReference type="CAZy" id="GH13">
    <property type="family name" value="Glycoside Hydrolase Family 13"/>
</dbReference>
<dbReference type="KEGG" id="sbm:Shew185_1321"/>
<dbReference type="HOGENOM" id="CLU_004245_3_2_6"/>
<dbReference type="UniPathway" id="UPA00164"/>
<dbReference type="GO" id="GO:0005829">
    <property type="term" value="C:cytosol"/>
    <property type="evidence" value="ECO:0007669"/>
    <property type="project" value="TreeGrafter"/>
</dbReference>
<dbReference type="GO" id="GO:0003844">
    <property type="term" value="F:1,4-alpha-glucan branching enzyme activity"/>
    <property type="evidence" value="ECO:0007669"/>
    <property type="project" value="UniProtKB-UniRule"/>
</dbReference>
<dbReference type="GO" id="GO:0043169">
    <property type="term" value="F:cation binding"/>
    <property type="evidence" value="ECO:0007669"/>
    <property type="project" value="InterPro"/>
</dbReference>
<dbReference type="GO" id="GO:0004553">
    <property type="term" value="F:hydrolase activity, hydrolyzing O-glycosyl compounds"/>
    <property type="evidence" value="ECO:0007669"/>
    <property type="project" value="InterPro"/>
</dbReference>
<dbReference type="GO" id="GO:0005978">
    <property type="term" value="P:glycogen biosynthetic process"/>
    <property type="evidence" value="ECO:0007669"/>
    <property type="project" value="UniProtKB-UniRule"/>
</dbReference>
<dbReference type="CDD" id="cd11322">
    <property type="entry name" value="AmyAc_Glg_BE"/>
    <property type="match status" value="1"/>
</dbReference>
<dbReference type="CDD" id="cd02855">
    <property type="entry name" value="E_set_GBE_prok_N"/>
    <property type="match status" value="1"/>
</dbReference>
<dbReference type="FunFam" id="2.60.40.10:FF:000169">
    <property type="entry name" value="1,4-alpha-glucan branching enzyme GlgB"/>
    <property type="match status" value="1"/>
</dbReference>
<dbReference type="FunFam" id="2.60.40.1180:FF:000002">
    <property type="entry name" value="1,4-alpha-glucan branching enzyme GlgB"/>
    <property type="match status" value="1"/>
</dbReference>
<dbReference type="FunFam" id="3.20.20.80:FF:000003">
    <property type="entry name" value="1,4-alpha-glucan branching enzyme GlgB"/>
    <property type="match status" value="1"/>
</dbReference>
<dbReference type="Gene3D" id="3.20.20.80">
    <property type="entry name" value="Glycosidases"/>
    <property type="match status" value="1"/>
</dbReference>
<dbReference type="Gene3D" id="2.60.40.1180">
    <property type="entry name" value="Golgi alpha-mannosidase II"/>
    <property type="match status" value="1"/>
</dbReference>
<dbReference type="Gene3D" id="2.60.40.10">
    <property type="entry name" value="Immunoglobulins"/>
    <property type="match status" value="1"/>
</dbReference>
<dbReference type="HAMAP" id="MF_00685">
    <property type="entry name" value="GlgB"/>
    <property type="match status" value="1"/>
</dbReference>
<dbReference type="InterPro" id="IPR006048">
    <property type="entry name" value="A-amylase/branching_C"/>
</dbReference>
<dbReference type="InterPro" id="IPR037439">
    <property type="entry name" value="Branching_enzy"/>
</dbReference>
<dbReference type="InterPro" id="IPR006407">
    <property type="entry name" value="GlgB"/>
</dbReference>
<dbReference type="InterPro" id="IPR054169">
    <property type="entry name" value="GlgB_N"/>
</dbReference>
<dbReference type="InterPro" id="IPR044143">
    <property type="entry name" value="GlgB_N_E_set_prok"/>
</dbReference>
<dbReference type="InterPro" id="IPR006047">
    <property type="entry name" value="Glyco_hydro_13_cat_dom"/>
</dbReference>
<dbReference type="InterPro" id="IPR004193">
    <property type="entry name" value="Glyco_hydro_13_N"/>
</dbReference>
<dbReference type="InterPro" id="IPR013780">
    <property type="entry name" value="Glyco_hydro_b"/>
</dbReference>
<dbReference type="InterPro" id="IPR017853">
    <property type="entry name" value="Glycoside_hydrolase_SF"/>
</dbReference>
<dbReference type="InterPro" id="IPR013783">
    <property type="entry name" value="Ig-like_fold"/>
</dbReference>
<dbReference type="InterPro" id="IPR014756">
    <property type="entry name" value="Ig_E-set"/>
</dbReference>
<dbReference type="NCBIfam" id="TIGR01515">
    <property type="entry name" value="branching_enzym"/>
    <property type="match status" value="1"/>
</dbReference>
<dbReference type="NCBIfam" id="NF003811">
    <property type="entry name" value="PRK05402.1"/>
    <property type="match status" value="1"/>
</dbReference>
<dbReference type="NCBIfam" id="NF008967">
    <property type="entry name" value="PRK12313.1"/>
    <property type="match status" value="1"/>
</dbReference>
<dbReference type="PANTHER" id="PTHR43651">
    <property type="entry name" value="1,4-ALPHA-GLUCAN-BRANCHING ENZYME"/>
    <property type="match status" value="1"/>
</dbReference>
<dbReference type="PANTHER" id="PTHR43651:SF3">
    <property type="entry name" value="1,4-ALPHA-GLUCAN-BRANCHING ENZYME"/>
    <property type="match status" value="1"/>
</dbReference>
<dbReference type="Pfam" id="PF00128">
    <property type="entry name" value="Alpha-amylase"/>
    <property type="match status" value="1"/>
</dbReference>
<dbReference type="Pfam" id="PF02806">
    <property type="entry name" value="Alpha-amylase_C"/>
    <property type="match status" value="1"/>
</dbReference>
<dbReference type="Pfam" id="PF02922">
    <property type="entry name" value="CBM_48"/>
    <property type="match status" value="1"/>
</dbReference>
<dbReference type="Pfam" id="PF22019">
    <property type="entry name" value="GlgB_N"/>
    <property type="match status" value="1"/>
</dbReference>
<dbReference type="PIRSF" id="PIRSF000463">
    <property type="entry name" value="GlgB"/>
    <property type="match status" value="1"/>
</dbReference>
<dbReference type="SMART" id="SM00642">
    <property type="entry name" value="Aamy"/>
    <property type="match status" value="1"/>
</dbReference>
<dbReference type="SUPFAM" id="SSF51445">
    <property type="entry name" value="(Trans)glycosidases"/>
    <property type="match status" value="1"/>
</dbReference>
<dbReference type="SUPFAM" id="SSF81296">
    <property type="entry name" value="E set domains"/>
    <property type="match status" value="2"/>
</dbReference>
<dbReference type="SUPFAM" id="SSF51011">
    <property type="entry name" value="Glycosyl hydrolase domain"/>
    <property type="match status" value="1"/>
</dbReference>
<proteinExistence type="inferred from homology"/>
<keyword id="KW-0119">Carbohydrate metabolism</keyword>
<keyword id="KW-0320">Glycogen biosynthesis</keyword>
<keyword id="KW-0321">Glycogen metabolism</keyword>
<keyword id="KW-0328">Glycosyltransferase</keyword>
<keyword id="KW-0808">Transferase</keyword>
<comment type="function">
    <text evidence="1">Catalyzes the formation of the alpha-1,6-glucosidic linkages in glycogen by scission of a 1,4-alpha-linked oligosaccharide from growing alpha-1,4-glucan chains and the subsequent attachment of the oligosaccharide to the alpha-1,6 position.</text>
</comment>
<comment type="catalytic activity">
    <reaction evidence="1">
        <text>Transfers a segment of a (1-&gt;4)-alpha-D-glucan chain to a primary hydroxy group in a similar glucan chain.</text>
        <dbReference type="EC" id="2.4.1.18"/>
    </reaction>
</comment>
<comment type="pathway">
    <text evidence="1">Glycan biosynthesis; glycogen biosynthesis.</text>
</comment>
<comment type="subunit">
    <text evidence="1">Monomer.</text>
</comment>
<comment type="similarity">
    <text evidence="1">Belongs to the glycosyl hydrolase 13 family. GlgB subfamily.</text>
</comment>
<name>GLGB_SHEB8</name>
<organism>
    <name type="scientific">Shewanella baltica (strain OS185)</name>
    <dbReference type="NCBI Taxonomy" id="402882"/>
    <lineage>
        <taxon>Bacteria</taxon>
        <taxon>Pseudomonadati</taxon>
        <taxon>Pseudomonadota</taxon>
        <taxon>Gammaproteobacteria</taxon>
        <taxon>Alteromonadales</taxon>
        <taxon>Shewanellaceae</taxon>
        <taxon>Shewanella</taxon>
    </lineage>
</organism>
<gene>
    <name evidence="1" type="primary">glgB</name>
    <name type="ordered locus">Shew185_1321</name>
</gene>
<reference key="1">
    <citation type="submission" date="2007-07" db="EMBL/GenBank/DDBJ databases">
        <title>Complete sequence of chromosome of Shewanella baltica OS185.</title>
        <authorList>
            <consortium name="US DOE Joint Genome Institute"/>
            <person name="Copeland A."/>
            <person name="Lucas S."/>
            <person name="Lapidus A."/>
            <person name="Barry K."/>
            <person name="Glavina del Rio T."/>
            <person name="Dalin E."/>
            <person name="Tice H."/>
            <person name="Pitluck S."/>
            <person name="Sims D."/>
            <person name="Brettin T."/>
            <person name="Bruce D."/>
            <person name="Detter J.C."/>
            <person name="Han C."/>
            <person name="Schmutz J."/>
            <person name="Larimer F."/>
            <person name="Land M."/>
            <person name="Hauser L."/>
            <person name="Kyrpides N."/>
            <person name="Mikhailova N."/>
            <person name="Brettar I."/>
            <person name="Rodrigues J."/>
            <person name="Konstantinidis K."/>
            <person name="Tiedje J."/>
            <person name="Richardson P."/>
        </authorList>
    </citation>
    <scope>NUCLEOTIDE SEQUENCE [LARGE SCALE GENOMIC DNA]</scope>
    <source>
        <strain>OS185</strain>
    </source>
</reference>